<dbReference type="EC" id="1.97.1.12" evidence="1"/>
<dbReference type="EMBL" id="AP009370">
    <property type="protein sequence ID" value="BAF50163.1"/>
    <property type="molecule type" value="Genomic_DNA"/>
</dbReference>
<dbReference type="RefSeq" id="YP_001123338.1">
    <property type="nucleotide sequence ID" value="NC_009269.1"/>
</dbReference>
<dbReference type="SMR" id="A4QKF8"/>
<dbReference type="GeneID" id="4961940"/>
<dbReference type="GO" id="GO:0009535">
    <property type="term" value="C:chloroplast thylakoid membrane"/>
    <property type="evidence" value="ECO:0007669"/>
    <property type="project" value="UniProtKB-SubCell"/>
</dbReference>
<dbReference type="GO" id="GO:0009522">
    <property type="term" value="C:photosystem I"/>
    <property type="evidence" value="ECO:0007669"/>
    <property type="project" value="UniProtKB-KW"/>
</dbReference>
<dbReference type="GO" id="GO:0051539">
    <property type="term" value="F:4 iron, 4 sulfur cluster binding"/>
    <property type="evidence" value="ECO:0007669"/>
    <property type="project" value="UniProtKB-KW"/>
</dbReference>
<dbReference type="GO" id="GO:0009055">
    <property type="term" value="F:electron transfer activity"/>
    <property type="evidence" value="ECO:0007669"/>
    <property type="project" value="UniProtKB-UniRule"/>
</dbReference>
<dbReference type="GO" id="GO:0046872">
    <property type="term" value="F:metal ion binding"/>
    <property type="evidence" value="ECO:0007669"/>
    <property type="project" value="UniProtKB-KW"/>
</dbReference>
<dbReference type="GO" id="GO:0016491">
    <property type="term" value="F:oxidoreductase activity"/>
    <property type="evidence" value="ECO:0007669"/>
    <property type="project" value="UniProtKB-KW"/>
</dbReference>
<dbReference type="GO" id="GO:0009773">
    <property type="term" value="P:photosynthetic electron transport in photosystem I"/>
    <property type="evidence" value="ECO:0007669"/>
    <property type="project" value="InterPro"/>
</dbReference>
<dbReference type="FunFam" id="3.30.70.20:FF:000001">
    <property type="entry name" value="Photosystem I iron-sulfur center"/>
    <property type="match status" value="1"/>
</dbReference>
<dbReference type="Gene3D" id="3.30.70.20">
    <property type="match status" value="1"/>
</dbReference>
<dbReference type="HAMAP" id="MF_01303">
    <property type="entry name" value="PSI_PsaC"/>
    <property type="match status" value="1"/>
</dbReference>
<dbReference type="InterPro" id="IPR017896">
    <property type="entry name" value="4Fe4S_Fe-S-bd"/>
</dbReference>
<dbReference type="InterPro" id="IPR017900">
    <property type="entry name" value="4Fe4S_Fe_S_CS"/>
</dbReference>
<dbReference type="InterPro" id="IPR050157">
    <property type="entry name" value="PSI_iron-sulfur_center"/>
</dbReference>
<dbReference type="InterPro" id="IPR017491">
    <property type="entry name" value="PSI_PsaC"/>
</dbReference>
<dbReference type="NCBIfam" id="TIGR03048">
    <property type="entry name" value="PS_I_psaC"/>
    <property type="match status" value="1"/>
</dbReference>
<dbReference type="PANTHER" id="PTHR24960:SF79">
    <property type="entry name" value="PHOTOSYSTEM I IRON-SULFUR CENTER"/>
    <property type="match status" value="1"/>
</dbReference>
<dbReference type="PANTHER" id="PTHR24960">
    <property type="entry name" value="PHOTOSYSTEM I IRON-SULFUR CENTER-RELATED"/>
    <property type="match status" value="1"/>
</dbReference>
<dbReference type="Pfam" id="PF14697">
    <property type="entry name" value="Fer4_21"/>
    <property type="match status" value="1"/>
</dbReference>
<dbReference type="SUPFAM" id="SSF54862">
    <property type="entry name" value="4Fe-4S ferredoxins"/>
    <property type="match status" value="1"/>
</dbReference>
<dbReference type="PROSITE" id="PS00198">
    <property type="entry name" value="4FE4S_FER_1"/>
    <property type="match status" value="2"/>
</dbReference>
<dbReference type="PROSITE" id="PS51379">
    <property type="entry name" value="4FE4S_FER_2"/>
    <property type="match status" value="2"/>
</dbReference>
<proteinExistence type="inferred from homology"/>
<sequence length="81" mass="9038">MSHSVKIYDTCIGCTQCVRACPTDVLEMIPWDGCKAKQIASAPRTEDCVGCKRCESACPTDFLSVRVYLWHETTRSMGLAY</sequence>
<evidence type="ECO:0000255" key="1">
    <source>
        <dbReference type="HAMAP-Rule" id="MF_01303"/>
    </source>
</evidence>
<organism>
    <name type="scientific">Barbarea verna</name>
    <name type="common">Land cress</name>
    <name type="synonym">Erysimum vernum</name>
    <dbReference type="NCBI Taxonomy" id="50458"/>
    <lineage>
        <taxon>Eukaryota</taxon>
        <taxon>Viridiplantae</taxon>
        <taxon>Streptophyta</taxon>
        <taxon>Embryophyta</taxon>
        <taxon>Tracheophyta</taxon>
        <taxon>Spermatophyta</taxon>
        <taxon>Magnoliopsida</taxon>
        <taxon>eudicotyledons</taxon>
        <taxon>Gunneridae</taxon>
        <taxon>Pentapetalae</taxon>
        <taxon>rosids</taxon>
        <taxon>malvids</taxon>
        <taxon>Brassicales</taxon>
        <taxon>Brassicaceae</taxon>
        <taxon>Cardamineae</taxon>
        <taxon>Barbarea</taxon>
    </lineage>
</organism>
<name>PSAC_BARVE</name>
<protein>
    <recommendedName>
        <fullName evidence="1">Photosystem I iron-sulfur center</fullName>
        <ecNumber evidence="1">1.97.1.12</ecNumber>
    </recommendedName>
    <alternativeName>
        <fullName evidence="1">9 kDa polypeptide</fullName>
    </alternativeName>
    <alternativeName>
        <fullName evidence="1">PSI-C</fullName>
    </alternativeName>
    <alternativeName>
        <fullName evidence="1">Photosystem I subunit VII</fullName>
    </alternativeName>
    <alternativeName>
        <fullName evidence="1">PsaC</fullName>
    </alternativeName>
</protein>
<comment type="function">
    <text evidence="1">Apoprotein for the two 4Fe-4S centers FA and FB of photosystem I (PSI); essential for photochemical activity. FB is the terminal electron acceptor of PSI, donating electrons to ferredoxin. The C-terminus interacts with PsaA/B/D and helps assemble the protein into the PSI complex. Required for binding of PsaD and PsaE to PSI. PSI is a plastocyanin-ferredoxin oxidoreductase, converting photonic excitation into a charge separation, which transfers an electron from the donor P700 chlorophyll pair to the spectroscopically characterized acceptors A0, A1, FX, FA and FB in turn.</text>
</comment>
<comment type="catalytic activity">
    <reaction evidence="1">
        <text>reduced [plastocyanin] + hnu + oxidized [2Fe-2S]-[ferredoxin] = oxidized [plastocyanin] + reduced [2Fe-2S]-[ferredoxin]</text>
        <dbReference type="Rhea" id="RHEA:30407"/>
        <dbReference type="Rhea" id="RHEA-COMP:10000"/>
        <dbReference type="Rhea" id="RHEA-COMP:10001"/>
        <dbReference type="Rhea" id="RHEA-COMP:10039"/>
        <dbReference type="Rhea" id="RHEA-COMP:10040"/>
        <dbReference type="ChEBI" id="CHEBI:29036"/>
        <dbReference type="ChEBI" id="CHEBI:30212"/>
        <dbReference type="ChEBI" id="CHEBI:33737"/>
        <dbReference type="ChEBI" id="CHEBI:33738"/>
        <dbReference type="ChEBI" id="CHEBI:49552"/>
        <dbReference type="EC" id="1.97.1.12"/>
    </reaction>
</comment>
<comment type="cofactor">
    <cofactor evidence="1">
        <name>[4Fe-4S] cluster</name>
        <dbReference type="ChEBI" id="CHEBI:49883"/>
    </cofactor>
    <text evidence="1">Binds 2 [4Fe-4S] clusters. Cluster 2 is most probably the spectroscopically characterized electron acceptor FA and cluster 1 is most probably FB.</text>
</comment>
<comment type="subunit">
    <text evidence="1">The eukaryotic PSI reaction center is composed of at least 11 subunits.</text>
</comment>
<comment type="subcellular location">
    <subcellularLocation>
        <location evidence="1">Plastid</location>
        <location evidence="1">Chloroplast thylakoid membrane</location>
        <topology evidence="1">Peripheral membrane protein</topology>
        <orientation evidence="1">Stromal side</orientation>
    </subcellularLocation>
</comment>
<geneLocation type="chloroplast"/>
<accession>A4QKF8</accession>
<gene>
    <name evidence="1" type="primary">psaC</name>
</gene>
<reference key="1">
    <citation type="submission" date="2007-03" db="EMBL/GenBank/DDBJ databases">
        <title>Sequencing analysis of Barbarea verna chloroplast DNA.</title>
        <authorList>
            <person name="Hosouchi T."/>
            <person name="Tsuruoka H."/>
            <person name="Kotani H."/>
        </authorList>
    </citation>
    <scope>NUCLEOTIDE SEQUENCE [LARGE SCALE GENOMIC DNA]</scope>
</reference>
<feature type="chain" id="PRO_0000292115" description="Photosystem I iron-sulfur center">
    <location>
        <begin position="1"/>
        <end position="81"/>
    </location>
</feature>
<feature type="domain" description="4Fe-4S ferredoxin-type 1" evidence="1">
    <location>
        <begin position="2"/>
        <end position="31"/>
    </location>
</feature>
<feature type="domain" description="4Fe-4S ferredoxin-type 2" evidence="1">
    <location>
        <begin position="39"/>
        <end position="68"/>
    </location>
</feature>
<feature type="binding site" evidence="1">
    <location>
        <position position="11"/>
    </location>
    <ligand>
        <name>[4Fe-4S] cluster</name>
        <dbReference type="ChEBI" id="CHEBI:49883"/>
        <label>1</label>
    </ligand>
</feature>
<feature type="binding site" evidence="1">
    <location>
        <position position="14"/>
    </location>
    <ligand>
        <name>[4Fe-4S] cluster</name>
        <dbReference type="ChEBI" id="CHEBI:49883"/>
        <label>1</label>
    </ligand>
</feature>
<feature type="binding site" evidence="1">
    <location>
        <position position="17"/>
    </location>
    <ligand>
        <name>[4Fe-4S] cluster</name>
        <dbReference type="ChEBI" id="CHEBI:49883"/>
        <label>1</label>
    </ligand>
</feature>
<feature type="binding site" evidence="1">
    <location>
        <position position="21"/>
    </location>
    <ligand>
        <name>[4Fe-4S] cluster</name>
        <dbReference type="ChEBI" id="CHEBI:49883"/>
        <label>2</label>
    </ligand>
</feature>
<feature type="binding site" evidence="1">
    <location>
        <position position="48"/>
    </location>
    <ligand>
        <name>[4Fe-4S] cluster</name>
        <dbReference type="ChEBI" id="CHEBI:49883"/>
        <label>2</label>
    </ligand>
</feature>
<feature type="binding site" evidence="1">
    <location>
        <position position="51"/>
    </location>
    <ligand>
        <name>[4Fe-4S] cluster</name>
        <dbReference type="ChEBI" id="CHEBI:49883"/>
        <label>2</label>
    </ligand>
</feature>
<feature type="binding site" evidence="1">
    <location>
        <position position="54"/>
    </location>
    <ligand>
        <name>[4Fe-4S] cluster</name>
        <dbReference type="ChEBI" id="CHEBI:49883"/>
        <label>2</label>
    </ligand>
</feature>
<feature type="binding site" evidence="1">
    <location>
        <position position="58"/>
    </location>
    <ligand>
        <name>[4Fe-4S] cluster</name>
        <dbReference type="ChEBI" id="CHEBI:49883"/>
        <label>1</label>
    </ligand>
</feature>
<keyword id="KW-0004">4Fe-4S</keyword>
<keyword id="KW-0150">Chloroplast</keyword>
<keyword id="KW-0249">Electron transport</keyword>
<keyword id="KW-0408">Iron</keyword>
<keyword id="KW-0411">Iron-sulfur</keyword>
<keyword id="KW-0472">Membrane</keyword>
<keyword id="KW-0479">Metal-binding</keyword>
<keyword id="KW-0560">Oxidoreductase</keyword>
<keyword id="KW-0602">Photosynthesis</keyword>
<keyword id="KW-0603">Photosystem I</keyword>
<keyword id="KW-0934">Plastid</keyword>
<keyword id="KW-0677">Repeat</keyword>
<keyword id="KW-0793">Thylakoid</keyword>
<keyword id="KW-0813">Transport</keyword>